<evidence type="ECO:0000250" key="1">
    <source>
        <dbReference type="UniProtKB" id="Q8BMS4"/>
    </source>
</evidence>
<evidence type="ECO:0000255" key="2">
    <source>
        <dbReference type="HAMAP-Rule" id="MF_03190"/>
    </source>
</evidence>
<evidence type="ECO:0000269" key="3">
    <source>
    </source>
</evidence>
<evidence type="ECO:0000269" key="4">
    <source>
    </source>
</evidence>
<evidence type="ECO:0000269" key="5">
    <source>
    </source>
</evidence>
<evidence type="ECO:0000269" key="6">
    <source>
    </source>
</evidence>
<evidence type="ECO:0000269" key="7">
    <source>
    </source>
</evidence>
<evidence type="ECO:0000269" key="8">
    <source>
    </source>
</evidence>
<evidence type="ECO:0000269" key="9">
    <source ref="1"/>
</evidence>
<evidence type="ECO:0000303" key="10">
    <source>
    </source>
</evidence>
<evidence type="ECO:0000305" key="11"/>
<evidence type="ECO:0000305" key="12">
    <source>
    </source>
</evidence>
<accession>Q9NZJ6</accession>
<accession>B3KPX0</accession>
<accession>Q5T061</accession>
<accession>Q6P4F0</accession>
<accession>Q8IXG6</accession>
<accession>Q96BG1</accession>
<accession>Q9H0N1</accession>
<sequence>MWSGRKLGSSGGWFLRVLGPGGCNTKAARPLISSAVYVKNQLSGTLQIKPGVFNEYRTIWFKSYRTIFSCLNRIKSFRYPWARLYSTSQTTVDSGEVKTFLALAHKWWDEQGVYAPLHSMNDLRVPFIRDNLLKTIPNHQPGKPLLGMKILDVGCGGGLLTEPLGRLGASVIGIDPVDENIKTAQCHKSFDPVLDKRIEYRVCSLEEIVEETAETFDAVVASEVVEHVIDLETFLQCCCQVLKPGGSLFITTINKTQLSYALGIVFSEQIASIVPKGTHTWEKFVSPETLESILESNGLSVQTVVGMLYNPFSGYWHWSENTSLNYAAYAVKSRVQEHPASAEFVLKGETEELQANACTNPAVHEKLKK</sequence>
<reference key="1">
    <citation type="submission" date="2001-02" db="EMBL/GenBank/DDBJ databases">
        <title>Isolation of full-length cDNA clones from human fetal brain cDNA library.</title>
        <authorList>
            <person name="Xie Y."/>
            <person name="Mao Y."/>
        </authorList>
    </citation>
    <scope>NUCLEOTIDE SEQUENCE [LARGE SCALE MRNA]</scope>
    <scope>VARIANTS GLU-134; GLY-272 AND HIS-329</scope>
    <source>
        <tissue>Fetal brain</tissue>
    </source>
</reference>
<reference key="2">
    <citation type="journal article" date="2001" name="Genome Res.">
        <title>Towards a catalog of human genes and proteins: sequencing and analysis of 500 novel complete protein coding human cDNAs.</title>
        <authorList>
            <person name="Wiemann S."/>
            <person name="Weil B."/>
            <person name="Wellenreuther R."/>
            <person name="Gassenhuber J."/>
            <person name="Glassl S."/>
            <person name="Ansorge W."/>
            <person name="Boecher M."/>
            <person name="Bloecker H."/>
            <person name="Bauersachs S."/>
            <person name="Blum H."/>
            <person name="Lauber J."/>
            <person name="Duesterhoeft A."/>
            <person name="Beyer A."/>
            <person name="Koehrer K."/>
            <person name="Strack N."/>
            <person name="Mewes H.-W."/>
            <person name="Ottenwaelder B."/>
            <person name="Obermaier B."/>
            <person name="Tampe J."/>
            <person name="Heubner D."/>
            <person name="Wambutt R."/>
            <person name="Korn B."/>
            <person name="Klein M."/>
            <person name="Poustka A."/>
        </authorList>
    </citation>
    <scope>NUCLEOTIDE SEQUENCE [LARGE SCALE MRNA]</scope>
    <scope>VARIANT HIS-329</scope>
    <source>
        <tissue>Kidney</tissue>
    </source>
</reference>
<reference key="3">
    <citation type="journal article" date="2004" name="Nat. Genet.">
        <title>Complete sequencing and characterization of 21,243 full-length human cDNAs.</title>
        <authorList>
            <person name="Ota T."/>
            <person name="Suzuki Y."/>
            <person name="Nishikawa T."/>
            <person name="Otsuki T."/>
            <person name="Sugiyama T."/>
            <person name="Irie R."/>
            <person name="Wakamatsu A."/>
            <person name="Hayashi K."/>
            <person name="Sato H."/>
            <person name="Nagai K."/>
            <person name="Kimura K."/>
            <person name="Makita H."/>
            <person name="Sekine M."/>
            <person name="Obayashi M."/>
            <person name="Nishi T."/>
            <person name="Shibahara T."/>
            <person name="Tanaka T."/>
            <person name="Ishii S."/>
            <person name="Yamamoto J."/>
            <person name="Saito K."/>
            <person name="Kawai Y."/>
            <person name="Isono Y."/>
            <person name="Nakamura Y."/>
            <person name="Nagahari K."/>
            <person name="Murakami K."/>
            <person name="Yasuda T."/>
            <person name="Iwayanagi T."/>
            <person name="Wagatsuma M."/>
            <person name="Shiratori A."/>
            <person name="Sudo H."/>
            <person name="Hosoiri T."/>
            <person name="Kaku Y."/>
            <person name="Kodaira H."/>
            <person name="Kondo H."/>
            <person name="Sugawara M."/>
            <person name="Takahashi M."/>
            <person name="Kanda K."/>
            <person name="Yokoi T."/>
            <person name="Furuya T."/>
            <person name="Kikkawa E."/>
            <person name="Omura Y."/>
            <person name="Abe K."/>
            <person name="Kamihara K."/>
            <person name="Katsuta N."/>
            <person name="Sato K."/>
            <person name="Tanikawa M."/>
            <person name="Yamazaki M."/>
            <person name="Ninomiya K."/>
            <person name="Ishibashi T."/>
            <person name="Yamashita H."/>
            <person name="Murakawa K."/>
            <person name="Fujimori K."/>
            <person name="Tanai H."/>
            <person name="Kimata M."/>
            <person name="Watanabe M."/>
            <person name="Hiraoka S."/>
            <person name="Chiba Y."/>
            <person name="Ishida S."/>
            <person name="Ono Y."/>
            <person name="Takiguchi S."/>
            <person name="Watanabe S."/>
            <person name="Yosida M."/>
            <person name="Hotuta T."/>
            <person name="Kusano J."/>
            <person name="Kanehori K."/>
            <person name="Takahashi-Fujii A."/>
            <person name="Hara H."/>
            <person name="Tanase T.-O."/>
            <person name="Nomura Y."/>
            <person name="Togiya S."/>
            <person name="Komai F."/>
            <person name="Hara R."/>
            <person name="Takeuchi K."/>
            <person name="Arita M."/>
            <person name="Imose N."/>
            <person name="Musashino K."/>
            <person name="Yuuki H."/>
            <person name="Oshima A."/>
            <person name="Sasaki N."/>
            <person name="Aotsuka S."/>
            <person name="Yoshikawa Y."/>
            <person name="Matsunawa H."/>
            <person name="Ichihara T."/>
            <person name="Shiohata N."/>
            <person name="Sano S."/>
            <person name="Moriya S."/>
            <person name="Momiyama H."/>
            <person name="Satoh N."/>
            <person name="Takami S."/>
            <person name="Terashima Y."/>
            <person name="Suzuki O."/>
            <person name="Nakagawa S."/>
            <person name="Senoh A."/>
            <person name="Mizoguchi H."/>
            <person name="Goto Y."/>
            <person name="Shimizu F."/>
            <person name="Wakebe H."/>
            <person name="Hishigaki H."/>
            <person name="Watanabe T."/>
            <person name="Sugiyama A."/>
            <person name="Takemoto M."/>
            <person name="Kawakami B."/>
            <person name="Yamazaki M."/>
            <person name="Watanabe K."/>
            <person name="Kumagai A."/>
            <person name="Itakura S."/>
            <person name="Fukuzumi Y."/>
            <person name="Fujimori Y."/>
            <person name="Komiyama M."/>
            <person name="Tashiro H."/>
            <person name="Tanigami A."/>
            <person name="Fujiwara T."/>
            <person name="Ono T."/>
            <person name="Yamada K."/>
            <person name="Fujii Y."/>
            <person name="Ozaki K."/>
            <person name="Hirao M."/>
            <person name="Ohmori Y."/>
            <person name="Kawabata A."/>
            <person name="Hikiji T."/>
            <person name="Kobatake N."/>
            <person name="Inagaki H."/>
            <person name="Ikema Y."/>
            <person name="Okamoto S."/>
            <person name="Okitani R."/>
            <person name="Kawakami T."/>
            <person name="Noguchi S."/>
            <person name="Itoh T."/>
            <person name="Shigeta K."/>
            <person name="Senba T."/>
            <person name="Matsumura K."/>
            <person name="Nakajima Y."/>
            <person name="Mizuno T."/>
            <person name="Morinaga M."/>
            <person name="Sasaki M."/>
            <person name="Togashi T."/>
            <person name="Oyama M."/>
            <person name="Hata H."/>
            <person name="Watanabe M."/>
            <person name="Komatsu T."/>
            <person name="Mizushima-Sugano J."/>
            <person name="Satoh T."/>
            <person name="Shirai Y."/>
            <person name="Takahashi Y."/>
            <person name="Nakagawa K."/>
            <person name="Okumura K."/>
            <person name="Nagase T."/>
            <person name="Nomura N."/>
            <person name="Kikuchi H."/>
            <person name="Masuho Y."/>
            <person name="Yamashita R."/>
            <person name="Nakai K."/>
            <person name="Yada T."/>
            <person name="Nakamura Y."/>
            <person name="Ohara O."/>
            <person name="Isogai T."/>
            <person name="Sugano S."/>
        </authorList>
    </citation>
    <scope>NUCLEOTIDE SEQUENCE [LARGE SCALE MRNA]</scope>
    <scope>VARIANTS GLY-272 AND HIS-329</scope>
    <source>
        <tissue>Skeletal muscle</tissue>
    </source>
</reference>
<reference key="4">
    <citation type="journal article" date="2003" name="Nature">
        <title>The DNA sequence and analysis of human chromosome 6.</title>
        <authorList>
            <person name="Mungall A.J."/>
            <person name="Palmer S.A."/>
            <person name="Sims S.K."/>
            <person name="Edwards C.A."/>
            <person name="Ashurst J.L."/>
            <person name="Wilming L."/>
            <person name="Jones M.C."/>
            <person name="Horton R."/>
            <person name="Hunt S.E."/>
            <person name="Scott C.E."/>
            <person name="Gilbert J.G.R."/>
            <person name="Clamp M.E."/>
            <person name="Bethel G."/>
            <person name="Milne S."/>
            <person name="Ainscough R."/>
            <person name="Almeida J.P."/>
            <person name="Ambrose K.D."/>
            <person name="Andrews T.D."/>
            <person name="Ashwell R.I.S."/>
            <person name="Babbage A.K."/>
            <person name="Bagguley C.L."/>
            <person name="Bailey J."/>
            <person name="Banerjee R."/>
            <person name="Barker D.J."/>
            <person name="Barlow K.F."/>
            <person name="Bates K."/>
            <person name="Beare D.M."/>
            <person name="Beasley H."/>
            <person name="Beasley O."/>
            <person name="Bird C.P."/>
            <person name="Blakey S.E."/>
            <person name="Bray-Allen S."/>
            <person name="Brook J."/>
            <person name="Brown A.J."/>
            <person name="Brown J.Y."/>
            <person name="Burford D.C."/>
            <person name="Burrill W."/>
            <person name="Burton J."/>
            <person name="Carder C."/>
            <person name="Carter N.P."/>
            <person name="Chapman J.C."/>
            <person name="Clark S.Y."/>
            <person name="Clark G."/>
            <person name="Clee C.M."/>
            <person name="Clegg S."/>
            <person name="Cobley V."/>
            <person name="Collier R.E."/>
            <person name="Collins J.E."/>
            <person name="Colman L.K."/>
            <person name="Corby N.R."/>
            <person name="Coville G.J."/>
            <person name="Culley K.M."/>
            <person name="Dhami P."/>
            <person name="Davies J."/>
            <person name="Dunn M."/>
            <person name="Earthrowl M.E."/>
            <person name="Ellington A.E."/>
            <person name="Evans K.A."/>
            <person name="Faulkner L."/>
            <person name="Francis M.D."/>
            <person name="Frankish A."/>
            <person name="Frankland J."/>
            <person name="French L."/>
            <person name="Garner P."/>
            <person name="Garnett J."/>
            <person name="Ghori M.J."/>
            <person name="Gilby L.M."/>
            <person name="Gillson C.J."/>
            <person name="Glithero R.J."/>
            <person name="Grafham D.V."/>
            <person name="Grant M."/>
            <person name="Gribble S."/>
            <person name="Griffiths C."/>
            <person name="Griffiths M.N.D."/>
            <person name="Hall R."/>
            <person name="Halls K.S."/>
            <person name="Hammond S."/>
            <person name="Harley J.L."/>
            <person name="Hart E.A."/>
            <person name="Heath P.D."/>
            <person name="Heathcott R."/>
            <person name="Holmes S.J."/>
            <person name="Howden P.J."/>
            <person name="Howe K.L."/>
            <person name="Howell G.R."/>
            <person name="Huckle E."/>
            <person name="Humphray S.J."/>
            <person name="Humphries M.D."/>
            <person name="Hunt A.R."/>
            <person name="Johnson C.M."/>
            <person name="Joy A.A."/>
            <person name="Kay M."/>
            <person name="Keenan S.J."/>
            <person name="Kimberley A.M."/>
            <person name="King A."/>
            <person name="Laird G.K."/>
            <person name="Langford C."/>
            <person name="Lawlor S."/>
            <person name="Leongamornlert D.A."/>
            <person name="Leversha M."/>
            <person name="Lloyd C.R."/>
            <person name="Lloyd D.M."/>
            <person name="Loveland J.E."/>
            <person name="Lovell J."/>
            <person name="Martin S."/>
            <person name="Mashreghi-Mohammadi M."/>
            <person name="Maslen G.L."/>
            <person name="Matthews L."/>
            <person name="McCann O.T."/>
            <person name="McLaren S.J."/>
            <person name="McLay K."/>
            <person name="McMurray A."/>
            <person name="Moore M.J.F."/>
            <person name="Mullikin J.C."/>
            <person name="Niblett D."/>
            <person name="Nickerson T."/>
            <person name="Novik K.L."/>
            <person name="Oliver K."/>
            <person name="Overton-Larty E.K."/>
            <person name="Parker A."/>
            <person name="Patel R."/>
            <person name="Pearce A.V."/>
            <person name="Peck A.I."/>
            <person name="Phillimore B.J.C.T."/>
            <person name="Phillips S."/>
            <person name="Plumb R.W."/>
            <person name="Porter K.M."/>
            <person name="Ramsey Y."/>
            <person name="Ranby S.A."/>
            <person name="Rice C.M."/>
            <person name="Ross M.T."/>
            <person name="Searle S.M."/>
            <person name="Sehra H.K."/>
            <person name="Sheridan E."/>
            <person name="Skuce C.D."/>
            <person name="Smith S."/>
            <person name="Smith M."/>
            <person name="Spraggon L."/>
            <person name="Squares S.L."/>
            <person name="Steward C.A."/>
            <person name="Sycamore N."/>
            <person name="Tamlyn-Hall G."/>
            <person name="Tester J."/>
            <person name="Theaker A.J."/>
            <person name="Thomas D.W."/>
            <person name="Thorpe A."/>
            <person name="Tracey A."/>
            <person name="Tromans A."/>
            <person name="Tubby B."/>
            <person name="Wall M."/>
            <person name="Wallis J.M."/>
            <person name="West A.P."/>
            <person name="White S.S."/>
            <person name="Whitehead S.L."/>
            <person name="Whittaker H."/>
            <person name="Wild A."/>
            <person name="Willey D.J."/>
            <person name="Wilmer T.E."/>
            <person name="Wood J.M."/>
            <person name="Wray P.W."/>
            <person name="Wyatt J.C."/>
            <person name="Young L."/>
            <person name="Younger R.M."/>
            <person name="Bentley D.R."/>
            <person name="Coulson A."/>
            <person name="Durbin R.M."/>
            <person name="Hubbard T."/>
            <person name="Sulston J.E."/>
            <person name="Dunham I."/>
            <person name="Rogers J."/>
            <person name="Beck S."/>
        </authorList>
    </citation>
    <scope>NUCLEOTIDE SEQUENCE [LARGE SCALE GENOMIC DNA]</scope>
</reference>
<reference key="5">
    <citation type="journal article" date="2004" name="Genome Res.">
        <title>The status, quality, and expansion of the NIH full-length cDNA project: the Mammalian Gene Collection (MGC).</title>
        <authorList>
            <consortium name="The MGC Project Team"/>
        </authorList>
    </citation>
    <scope>NUCLEOTIDE SEQUENCE [LARGE SCALE MRNA]</scope>
    <scope>VARIANTS GLU-134; GLY-272 AND HIS-329</scope>
    <source>
        <tissue>Brain</tissue>
        <tissue>Skin</tissue>
    </source>
</reference>
<reference key="6">
    <citation type="journal article" date="2000" name="J. Biol. Chem.">
        <title>Isolation and functional expression of human COQ3, a gene encoding a methyltransferase required for ubiquinone biosynthesis.</title>
        <authorList>
            <person name="Jonassen T."/>
            <person name="Clarke C.F."/>
        </authorList>
    </citation>
    <scope>NUCLEOTIDE SEQUENCE [MRNA] OF 11-369</scope>
    <scope>FUNCTION</scope>
    <scope>CATALYTIC ACTIVITY</scope>
    <scope>PATHWAY</scope>
    <scope>VARIANTS GLY-272 AND HIS-329</scope>
</reference>
<reference key="7">
    <citation type="journal article" date="2011" name="BMC Syst. Biol.">
        <title>Initial characterization of the human central proteome.</title>
        <authorList>
            <person name="Burkard T.R."/>
            <person name="Planyavsky M."/>
            <person name="Kaupe I."/>
            <person name="Breitwieser F.P."/>
            <person name="Buerckstuemmer T."/>
            <person name="Bennett K.L."/>
            <person name="Superti-Furga G."/>
            <person name="Colinge J."/>
        </authorList>
    </citation>
    <scope>IDENTIFICATION BY MASS SPECTROMETRY [LARGE SCALE ANALYSIS]</scope>
</reference>
<reference key="8">
    <citation type="journal article" date="2014" name="J. Proteomics">
        <title>An enzyme assisted RP-RPLC approach for in-depth analysis of human liver phosphoproteome.</title>
        <authorList>
            <person name="Bian Y."/>
            <person name="Song C."/>
            <person name="Cheng K."/>
            <person name="Dong M."/>
            <person name="Wang F."/>
            <person name="Huang J."/>
            <person name="Sun D."/>
            <person name="Wang L."/>
            <person name="Ye M."/>
            <person name="Zou H."/>
        </authorList>
    </citation>
    <scope>IDENTIFICATION BY MASS SPECTROMETRY [LARGE SCALE ANALYSIS]</scope>
    <source>
        <tissue>Liver</tissue>
    </source>
</reference>
<reference key="9">
    <citation type="journal article" date="2016" name="Mol. Cell">
        <title>Mitochondrial protein interaction mapping identifies regulators of respiratory chain function.</title>
        <authorList>
            <person name="Floyd B.J."/>
            <person name="Wilkerson E.M."/>
            <person name="Veling M.T."/>
            <person name="Minogue C.E."/>
            <person name="Xia C."/>
            <person name="Beebe E.T."/>
            <person name="Wrobel R.L."/>
            <person name="Cho H."/>
            <person name="Kremer L.S."/>
            <person name="Alston C.L."/>
            <person name="Gromek K.A."/>
            <person name="Dolan B.K."/>
            <person name="Ulbrich A."/>
            <person name="Stefely J.A."/>
            <person name="Bohl S.L."/>
            <person name="Werner K.M."/>
            <person name="Jochem A."/>
            <person name="Westphall M.S."/>
            <person name="Rensvold J.W."/>
            <person name="Taylor R.W."/>
            <person name="Prokisch H."/>
            <person name="Kim J.J."/>
            <person name="Coon J.J."/>
            <person name="Pagliarini D.J."/>
        </authorList>
    </citation>
    <scope>SUBCELLULAR LOCATION</scope>
    <scope>IDENTIFICATION IN THE COQ ENZYME COMPLEX</scope>
</reference>
<reference key="10">
    <citation type="journal article" date="2024" name="Nat. Catal.">
        <title>In vitro construction of the COQ metabolon unveils the molecular determinants of coenzyme Q biosynthesis.</title>
        <authorList>
            <person name="Nicoll C.R."/>
            <person name="Alvigini L."/>
            <person name="Gottinger A."/>
            <person name="Cecchini D."/>
            <person name="Mannucci B."/>
            <person name="Corana F."/>
            <person name="Mascotti M.L."/>
            <person name="Mattevi A."/>
        </authorList>
    </citation>
    <scope>FUNCTION</scope>
    <scope>CATALYTIC ACTIVITY</scope>
    <scope>PATHWAY</scope>
    <scope>COFACTOR</scope>
</reference>
<proteinExistence type="evidence at protein level"/>
<feature type="transit peptide" description="Mitochondrion" evidence="2">
    <location>
        <begin position="1"/>
        <end position="85"/>
    </location>
</feature>
<feature type="chain" id="PRO_0000035926" description="Ubiquinone biosynthesis O-methyltransferase, mitochondrial">
    <location>
        <begin position="86"/>
        <end position="369"/>
    </location>
</feature>
<feature type="binding site" evidence="2">
    <location>
        <position position="124"/>
    </location>
    <ligand>
        <name>S-adenosyl-L-methionine</name>
        <dbReference type="ChEBI" id="CHEBI:59789"/>
    </ligand>
</feature>
<feature type="binding site" evidence="2">
    <location>
        <position position="154"/>
    </location>
    <ligand>
        <name>S-adenosyl-L-methionine</name>
        <dbReference type="ChEBI" id="CHEBI:59789"/>
    </ligand>
</feature>
<feature type="binding site" evidence="2">
    <location>
        <position position="175"/>
    </location>
    <ligand>
        <name>S-adenosyl-L-methionine</name>
        <dbReference type="ChEBI" id="CHEBI:59789"/>
    </ligand>
</feature>
<feature type="binding site" evidence="2">
    <location>
        <position position="222"/>
    </location>
    <ligand>
        <name>S-adenosyl-L-methionine</name>
        <dbReference type="ChEBI" id="CHEBI:59789"/>
    </ligand>
</feature>
<feature type="binding site" evidence="2">
    <location>
        <position position="223"/>
    </location>
    <ligand>
        <name>Mg(2+)</name>
        <dbReference type="ChEBI" id="CHEBI:18420"/>
    </ligand>
</feature>
<feature type="binding site" evidence="2">
    <location>
        <position position="226"/>
    </location>
    <ligand>
        <name>Mg(2+)</name>
        <dbReference type="ChEBI" id="CHEBI:18420"/>
    </ligand>
</feature>
<feature type="binding site" evidence="2">
    <location>
        <position position="227"/>
    </location>
    <ligand>
        <name>Mg(2+)</name>
        <dbReference type="ChEBI" id="CHEBI:18420"/>
    </ligand>
</feature>
<feature type="modified residue" description="N6-acetyllysine" evidence="1">
    <location>
        <position position="143"/>
    </location>
</feature>
<feature type="modified residue" description="N6-acetyllysine" evidence="1">
    <location>
        <position position="149"/>
    </location>
</feature>
<feature type="modified residue" description="N6-acetyllysine" evidence="1">
    <location>
        <position position="196"/>
    </location>
</feature>
<feature type="sequence variant" id="VAR_061925" description="In dbSNP:rs11548336." evidence="6 9">
    <original>K</original>
    <variation>E</variation>
    <location>
        <position position="134"/>
    </location>
</feature>
<feature type="sequence variant" id="VAR_020789" description="In dbSNP:rs6925344." evidence="3 5 6 9">
    <original>S</original>
    <variation>G</variation>
    <location>
        <position position="272"/>
    </location>
</feature>
<feature type="sequence variant" id="VAR_020790" description="In dbSNP:rs4144164." evidence="3 4 5 6 9">
    <original>Y</original>
    <variation>H</variation>
    <location>
        <position position="329"/>
    </location>
</feature>
<feature type="sequence conflict" description="In Ref. 2; CAB66660." evidence="11" ref="2">
    <original>G</original>
    <variation>V</variation>
    <location>
        <position position="21"/>
    </location>
</feature>
<feature type="sequence conflict" description="In Ref. 2; CAB66660." evidence="11" ref="2">
    <original>N</original>
    <variation>D</variation>
    <location>
        <position position="180"/>
    </location>
</feature>
<feature type="sequence conflict" description="In Ref. 1; AAN76515." evidence="11" ref="1">
    <original>PET</original>
    <variation>LEP</variation>
    <location>
        <begin position="287"/>
        <end position="289"/>
    </location>
</feature>
<feature type="sequence conflict" description="In Ref. 1; AAN76515." evidence="11" ref="1">
    <original>N</original>
    <variation>D</variation>
    <location>
        <position position="321"/>
    </location>
</feature>
<protein>
    <recommendedName>
        <fullName evidence="2">Ubiquinone biosynthesis O-methyltransferase, mitochondrial</fullName>
    </recommendedName>
    <alternativeName>
        <fullName evidence="2">3-demethylubiquinol 3-O-methyltransferase</fullName>
        <ecNumber evidence="2">2.1.1.64</ecNumber>
    </alternativeName>
    <alternativeName>
        <fullName evidence="2">3-demethylubiquinone 3-O-methyltransferase</fullName>
        <ecNumber evidence="2 12">2.1.1.-</ecNumber>
    </alternativeName>
    <alternativeName>
        <fullName evidence="2">Polyprenyldihydroxybenzoate methyltransferase</fullName>
        <ecNumber evidence="2 3 12">2.1.1.114</ecNumber>
    </alternativeName>
</protein>
<gene>
    <name evidence="2 10" type="primary">COQ3</name>
    <name type="ORF">UG0215E05</name>
</gene>
<keyword id="KW-0007">Acetylation</keyword>
<keyword id="KW-0472">Membrane</keyword>
<keyword id="KW-0489">Methyltransferase</keyword>
<keyword id="KW-0496">Mitochondrion</keyword>
<keyword id="KW-0999">Mitochondrion inner membrane</keyword>
<keyword id="KW-1267">Proteomics identification</keyword>
<keyword id="KW-1185">Reference proteome</keyword>
<keyword id="KW-0949">S-adenosyl-L-methionine</keyword>
<keyword id="KW-0808">Transferase</keyword>
<keyword id="KW-0809">Transit peptide</keyword>
<keyword id="KW-0831">Ubiquinone biosynthesis</keyword>
<dbReference type="EC" id="2.1.1.64" evidence="2"/>
<dbReference type="EC" id="2.1.1.-" evidence="2 12"/>
<dbReference type="EC" id="2.1.1.114" evidence="2 3 12"/>
<dbReference type="EMBL" id="AF351615">
    <property type="protein sequence ID" value="AAN76515.1"/>
    <property type="molecule type" value="mRNA"/>
</dbReference>
<dbReference type="EMBL" id="AL136726">
    <property type="protein sequence ID" value="CAB66660.1"/>
    <property type="molecule type" value="mRNA"/>
</dbReference>
<dbReference type="EMBL" id="AK056955">
    <property type="protein sequence ID" value="BAG51832.1"/>
    <property type="molecule type" value="mRNA"/>
</dbReference>
<dbReference type="EMBL" id="AL513550">
    <property type="status" value="NOT_ANNOTATED_CDS"/>
    <property type="molecule type" value="Genomic_DNA"/>
</dbReference>
<dbReference type="EMBL" id="BC015634">
    <property type="protein sequence ID" value="AAH15634.2"/>
    <property type="molecule type" value="mRNA"/>
</dbReference>
<dbReference type="EMBL" id="BC063463">
    <property type="protein sequence ID" value="AAH63463.1"/>
    <property type="molecule type" value="mRNA"/>
</dbReference>
<dbReference type="EMBL" id="AF193016">
    <property type="protein sequence ID" value="AAF66826.1"/>
    <property type="status" value="ALT_FRAME"/>
    <property type="molecule type" value="mRNA"/>
</dbReference>
<dbReference type="CCDS" id="CCDS5042.1"/>
<dbReference type="RefSeq" id="NP_059117.3">
    <property type="nucleotide sequence ID" value="NM_017421.3"/>
</dbReference>
<dbReference type="SMR" id="Q9NZJ6"/>
<dbReference type="BioGRID" id="119731">
    <property type="interactions" value="55"/>
</dbReference>
<dbReference type="ComplexPortal" id="CPX-3642">
    <property type="entry name" value="CoQ biosynthetic complex"/>
</dbReference>
<dbReference type="FunCoup" id="Q9NZJ6">
    <property type="interactions" value="838"/>
</dbReference>
<dbReference type="IntAct" id="Q9NZJ6">
    <property type="interactions" value="36"/>
</dbReference>
<dbReference type="STRING" id="9606.ENSP00000254759"/>
<dbReference type="GlyGen" id="Q9NZJ6">
    <property type="glycosylation" value="1 site, 1 O-linked glycan (1 site)"/>
</dbReference>
<dbReference type="iPTMnet" id="Q9NZJ6"/>
<dbReference type="PhosphoSitePlus" id="Q9NZJ6"/>
<dbReference type="SwissPalm" id="Q9NZJ6"/>
<dbReference type="BioMuta" id="COQ3"/>
<dbReference type="DMDM" id="313104241"/>
<dbReference type="jPOST" id="Q9NZJ6"/>
<dbReference type="MassIVE" id="Q9NZJ6"/>
<dbReference type="PaxDb" id="9606-ENSP00000254759"/>
<dbReference type="PeptideAtlas" id="Q9NZJ6"/>
<dbReference type="ProteomicsDB" id="83417"/>
<dbReference type="Pumba" id="Q9NZJ6"/>
<dbReference type="Antibodypedia" id="31993">
    <property type="antibodies" value="163 antibodies from 22 providers"/>
</dbReference>
<dbReference type="DNASU" id="51805"/>
<dbReference type="Ensembl" id="ENST00000254759.8">
    <property type="protein sequence ID" value="ENSP00000254759.3"/>
    <property type="gene ID" value="ENSG00000132423.12"/>
</dbReference>
<dbReference type="GeneID" id="51805"/>
<dbReference type="KEGG" id="hsa:51805"/>
<dbReference type="MANE-Select" id="ENST00000254759.8">
    <property type="protein sequence ID" value="ENSP00000254759.3"/>
    <property type="RefSeq nucleotide sequence ID" value="NM_017421.4"/>
    <property type="RefSeq protein sequence ID" value="NP_059117.3"/>
</dbReference>
<dbReference type="UCSC" id="uc003ppk.4">
    <property type="organism name" value="human"/>
</dbReference>
<dbReference type="AGR" id="HGNC:18175"/>
<dbReference type="CTD" id="51805"/>
<dbReference type="DisGeNET" id="51805"/>
<dbReference type="GeneCards" id="COQ3"/>
<dbReference type="HGNC" id="HGNC:18175">
    <property type="gene designation" value="COQ3"/>
</dbReference>
<dbReference type="HPA" id="ENSG00000132423">
    <property type="expression patterns" value="Tissue enhanced (tongue)"/>
</dbReference>
<dbReference type="MIM" id="605196">
    <property type="type" value="gene"/>
</dbReference>
<dbReference type="neXtProt" id="NX_Q9NZJ6"/>
<dbReference type="OpenTargets" id="ENSG00000132423"/>
<dbReference type="PharmGKB" id="PA134934287"/>
<dbReference type="VEuPathDB" id="HostDB:ENSG00000132423"/>
<dbReference type="eggNOG" id="KOG1270">
    <property type="taxonomic scope" value="Eukaryota"/>
</dbReference>
<dbReference type="GeneTree" id="ENSGT00390000007284"/>
<dbReference type="InParanoid" id="Q9NZJ6"/>
<dbReference type="OMA" id="LASRWWD"/>
<dbReference type="OrthoDB" id="3265906at2759"/>
<dbReference type="PAN-GO" id="Q9NZJ6">
    <property type="GO annotations" value="3 GO annotations based on evolutionary models"/>
</dbReference>
<dbReference type="PhylomeDB" id="Q9NZJ6"/>
<dbReference type="TreeFam" id="TF314553"/>
<dbReference type="BioCyc" id="MetaCyc:HS05632-MONOMER"/>
<dbReference type="BRENDA" id="2.1.1.114">
    <property type="organism ID" value="2681"/>
</dbReference>
<dbReference type="BRENDA" id="2.1.1.222">
    <property type="organism ID" value="2681"/>
</dbReference>
<dbReference type="BRENDA" id="2.1.1.64">
    <property type="organism ID" value="2681"/>
</dbReference>
<dbReference type="PathwayCommons" id="Q9NZJ6"/>
<dbReference type="Reactome" id="R-HSA-2142789">
    <property type="pathway name" value="Ubiquinol biosynthesis"/>
</dbReference>
<dbReference type="SignaLink" id="Q9NZJ6"/>
<dbReference type="UniPathway" id="UPA00232"/>
<dbReference type="BioGRID-ORCS" id="51805">
    <property type="hits" value="64 hits in 1153 CRISPR screens"/>
</dbReference>
<dbReference type="ChiTaRS" id="COQ3">
    <property type="organism name" value="human"/>
</dbReference>
<dbReference type="GenomeRNAi" id="51805"/>
<dbReference type="Pharos" id="Q9NZJ6">
    <property type="development level" value="Tbio"/>
</dbReference>
<dbReference type="PRO" id="PR:Q9NZJ6"/>
<dbReference type="Proteomes" id="UP000005640">
    <property type="component" value="Chromosome 6"/>
</dbReference>
<dbReference type="RNAct" id="Q9NZJ6">
    <property type="molecule type" value="protein"/>
</dbReference>
<dbReference type="Bgee" id="ENSG00000132423">
    <property type="expression patterns" value="Expressed in biceps brachii and 187 other cell types or tissues"/>
</dbReference>
<dbReference type="ExpressionAtlas" id="Q9NZJ6">
    <property type="expression patterns" value="baseline and differential"/>
</dbReference>
<dbReference type="GO" id="GO:0031314">
    <property type="term" value="C:extrinsic component of mitochondrial inner membrane"/>
    <property type="evidence" value="ECO:0007669"/>
    <property type="project" value="UniProtKB-UniRule"/>
</dbReference>
<dbReference type="GO" id="GO:0005743">
    <property type="term" value="C:mitochondrial inner membrane"/>
    <property type="evidence" value="ECO:0000314"/>
    <property type="project" value="ComplexPortal"/>
</dbReference>
<dbReference type="GO" id="GO:0005759">
    <property type="term" value="C:mitochondrial matrix"/>
    <property type="evidence" value="ECO:0007669"/>
    <property type="project" value="Ensembl"/>
</dbReference>
<dbReference type="GO" id="GO:0005739">
    <property type="term" value="C:mitochondrion"/>
    <property type="evidence" value="ECO:0000314"/>
    <property type="project" value="UniProtKB"/>
</dbReference>
<dbReference type="GO" id="GO:0110142">
    <property type="term" value="C:ubiquinone biosynthesis complex"/>
    <property type="evidence" value="ECO:0000353"/>
    <property type="project" value="ComplexPortal"/>
</dbReference>
<dbReference type="GO" id="GO:0061542">
    <property type="term" value="F:3-demethylubiquinol 3-O-methyltransferase activity"/>
    <property type="evidence" value="ECO:0000314"/>
    <property type="project" value="FlyBase"/>
</dbReference>
<dbReference type="GO" id="GO:0120537">
    <property type="term" value="F:3-demethylubiquinone 3-O-methyltransferase activity"/>
    <property type="evidence" value="ECO:0000314"/>
    <property type="project" value="UniProtKB"/>
</dbReference>
<dbReference type="GO" id="GO:0008171">
    <property type="term" value="F:O-methyltransferase activity"/>
    <property type="evidence" value="ECO:0000316"/>
    <property type="project" value="UniProtKB"/>
</dbReference>
<dbReference type="GO" id="GO:0010420">
    <property type="term" value="F:polyprenyldihydroxybenzoate methyltransferase activity"/>
    <property type="evidence" value="ECO:0000314"/>
    <property type="project" value="UniProtKB"/>
</dbReference>
<dbReference type="GO" id="GO:0006071">
    <property type="term" value="P:glycerol metabolic process"/>
    <property type="evidence" value="ECO:0000316"/>
    <property type="project" value="UniProtKB"/>
</dbReference>
<dbReference type="GO" id="GO:0032259">
    <property type="term" value="P:methylation"/>
    <property type="evidence" value="ECO:0007669"/>
    <property type="project" value="UniProtKB-KW"/>
</dbReference>
<dbReference type="GO" id="GO:0006744">
    <property type="term" value="P:ubiquinone biosynthetic process"/>
    <property type="evidence" value="ECO:0000314"/>
    <property type="project" value="UniProtKB"/>
</dbReference>
<dbReference type="CDD" id="cd02440">
    <property type="entry name" value="AdoMet_MTases"/>
    <property type="match status" value="1"/>
</dbReference>
<dbReference type="FunFam" id="3.40.50.150:FF:000142">
    <property type="entry name" value="Ubiquinone biosynthesis O-methyltransferase, mitochondrial"/>
    <property type="match status" value="1"/>
</dbReference>
<dbReference type="Gene3D" id="3.40.50.150">
    <property type="entry name" value="Vaccinia Virus protein VP39"/>
    <property type="match status" value="1"/>
</dbReference>
<dbReference type="HAMAP" id="MF_00472">
    <property type="entry name" value="UbiG"/>
    <property type="match status" value="1"/>
</dbReference>
<dbReference type="InterPro" id="IPR029063">
    <property type="entry name" value="SAM-dependent_MTases_sf"/>
</dbReference>
<dbReference type="InterPro" id="IPR010233">
    <property type="entry name" value="UbiG_MeTrfase"/>
</dbReference>
<dbReference type="NCBIfam" id="TIGR01983">
    <property type="entry name" value="UbiG"/>
    <property type="match status" value="1"/>
</dbReference>
<dbReference type="PANTHER" id="PTHR43464">
    <property type="entry name" value="METHYLTRANSFERASE"/>
    <property type="match status" value="1"/>
</dbReference>
<dbReference type="PANTHER" id="PTHR43464:SF19">
    <property type="entry name" value="UBIQUINONE BIOSYNTHESIS O-METHYLTRANSFERASE, MITOCHONDRIAL"/>
    <property type="match status" value="1"/>
</dbReference>
<dbReference type="Pfam" id="PF13489">
    <property type="entry name" value="Methyltransf_23"/>
    <property type="match status" value="1"/>
</dbReference>
<dbReference type="SUPFAM" id="SSF53335">
    <property type="entry name" value="S-adenosyl-L-methionine-dependent methyltransferases"/>
    <property type="match status" value="1"/>
</dbReference>
<name>COQ3_HUMAN</name>
<comment type="function">
    <text evidence="2 3 8">O-methyltransferase required for two non-consecutive steps during ubiquinone biosynthesis (By similarity) (PubMed:10777520, PubMed:38425362). Catalyzes the 2 O-methylation of 3,4-dihydroxy-5-(all-trans-decaprenyl)benzoic acid into 4-hydroxy-3-methoxy-5-(all-trans-decaprenyl)benzoic acid (By similarity) (PubMed:10777520, PubMed:38425362). Also catalyzes the last step of ubiquinone biosynthesis by mediating methylation of 3-demethylubiquinone into ubiquinone (By similarity) (PubMed:38425362). Also able to mediate the methylation of 3-demethylubiquinol-10 into ubiquinol-10 (By similarity) (PubMed:10777520).</text>
</comment>
<comment type="catalytic activity">
    <reaction evidence="2 3 12">
        <text>3,4-dihydroxy-5-(all-trans-decaprenyl)benzoate + S-adenosyl-L-methionine = 4-hydroxy-3-methoxy-5-(all-trans-decaprenyl)benzoate + S-adenosyl-L-homocysteine + H(+)</text>
        <dbReference type="Rhea" id="RHEA:44492"/>
        <dbReference type="ChEBI" id="CHEBI:15378"/>
        <dbReference type="ChEBI" id="CHEBI:57856"/>
        <dbReference type="ChEBI" id="CHEBI:59789"/>
        <dbReference type="ChEBI" id="CHEBI:62793"/>
        <dbReference type="ChEBI" id="CHEBI:62796"/>
        <dbReference type="EC" id="2.1.1.114"/>
    </reaction>
</comment>
<comment type="catalytic activity">
    <reaction evidence="2 12">
        <text>a 3-demethylubiquinone + S-adenosyl-L-methionine = a ubiquinone + S-adenosyl-L-homocysteine</text>
        <dbReference type="Rhea" id="RHEA:81215"/>
        <dbReference type="Rhea" id="RHEA-COMP:9565"/>
        <dbReference type="Rhea" id="RHEA-COMP:19654"/>
        <dbReference type="ChEBI" id="CHEBI:16389"/>
        <dbReference type="ChEBI" id="CHEBI:57856"/>
        <dbReference type="ChEBI" id="CHEBI:59789"/>
        <dbReference type="ChEBI" id="CHEBI:231825"/>
    </reaction>
</comment>
<comment type="catalytic activity">
    <reaction evidence="2 3">
        <text>3-demethylubiquinol-10 + S-adenosyl-L-methionine = ubiquinol-10 + S-adenosyl-L-homocysteine + H(+)</text>
        <dbReference type="Rhea" id="RHEA:44412"/>
        <dbReference type="ChEBI" id="CHEBI:15378"/>
        <dbReference type="ChEBI" id="CHEBI:57856"/>
        <dbReference type="ChEBI" id="CHEBI:59789"/>
        <dbReference type="ChEBI" id="CHEBI:64182"/>
        <dbReference type="ChEBI" id="CHEBI:64183"/>
        <dbReference type="EC" id="2.1.1.64"/>
    </reaction>
</comment>
<comment type="cofactor">
    <cofactor evidence="2 8">
        <name>Mg(2+)</name>
        <dbReference type="ChEBI" id="CHEBI:18420"/>
    </cofactor>
</comment>
<comment type="pathway">
    <text evidence="2 3 8">Cofactor biosynthesis; ubiquinone biosynthesis.</text>
</comment>
<comment type="subunit">
    <text evidence="2 7">Component of a multi-subunit COQ enzyme complex, composed of at least COQ3, COQ4, COQ5, COQ6, COQ7 and COQ9.</text>
</comment>
<comment type="interaction">
    <interactant intactId="EBI-10897372">
        <id>Q9NZJ6</id>
    </interactant>
    <interactant intactId="EBI-12284865">
        <id>Q9Y3A0</id>
        <label>COQ4</label>
    </interactant>
    <organismsDiffer>false</organismsDiffer>
    <experiments>4</experiments>
</comment>
<comment type="interaction">
    <interactant intactId="EBI-10897372">
        <id>Q9NZJ6</id>
    </interactant>
    <interactant intactId="EBI-12577722">
        <id>Q5HYK3</id>
        <label>COQ5</label>
    </interactant>
    <organismsDiffer>false</organismsDiffer>
    <experiments>7</experiments>
</comment>
<comment type="interaction">
    <interactant intactId="EBI-10897372">
        <id>Q9NZJ6</id>
    </interactant>
    <interactant intactId="EBI-718148">
        <id>Q9Y2Z9</id>
        <label>COQ6</label>
    </interactant>
    <organismsDiffer>false</organismsDiffer>
    <experiments>4</experiments>
</comment>
<comment type="interaction">
    <interactant intactId="EBI-10897372">
        <id>Q9NZJ6</id>
    </interactant>
    <interactant intactId="EBI-11017131">
        <id>Q99807</id>
        <label>COQ7</label>
    </interactant>
    <organismsDiffer>false</organismsDiffer>
    <experiments>5</experiments>
</comment>
<comment type="interaction">
    <interactant intactId="EBI-10897372">
        <id>Q9NZJ6</id>
    </interactant>
    <interactant intactId="EBI-11978907">
        <id>Q9ULP0-2</id>
        <label>NDRG4</label>
    </interactant>
    <organismsDiffer>false</organismsDiffer>
    <experiments>3</experiments>
</comment>
<comment type="interaction">
    <interactant intactId="EBI-10897372">
        <id>Q9NZJ6</id>
    </interactant>
    <interactant intactId="EBI-1751791">
        <id>Q9Y697</id>
        <label>NFS1</label>
    </interactant>
    <organismsDiffer>false</organismsDiffer>
    <experiments>3</experiments>
</comment>
<comment type="interaction">
    <interactant intactId="EBI-10897372">
        <id>Q9NZJ6</id>
    </interactant>
    <interactant intactId="EBI-742898">
        <id>P43378</id>
        <label>PTPN9</label>
    </interactant>
    <organismsDiffer>false</organismsDiffer>
    <experiments>3</experiments>
</comment>
<comment type="interaction">
    <interactant intactId="EBI-10897372">
        <id>Q9NZJ6</id>
    </interactant>
    <interactant intactId="EBI-2822329">
        <id>Q13596</id>
        <label>SNX1</label>
    </interactant>
    <organismsDiffer>false</organismsDiffer>
    <experiments>3</experiments>
</comment>
<comment type="interaction">
    <interactant intactId="EBI-10897372">
        <id>Q9NZJ6</id>
    </interactant>
    <interactant intactId="EBI-10210710">
        <id>P49638</id>
        <label>TTPA</label>
    </interactant>
    <organismsDiffer>false</organismsDiffer>
    <experiments>3</experiments>
</comment>
<comment type="subcellular location">
    <subcellularLocation>
        <location evidence="2 7">Mitochondrion inner membrane</location>
        <topology evidence="2">Peripheral membrane protein</topology>
        <orientation evidence="2">Matrix side</orientation>
    </subcellularLocation>
</comment>
<comment type="similarity">
    <text evidence="2">Belongs to the class I-like SAM-binding methyltransferase superfamily. UbiG/COQ3 family.</text>
</comment>
<comment type="sequence caution" evidence="11">
    <conflict type="frameshift">
        <sequence resource="EMBL-CDS" id="AAF66826"/>
    </conflict>
</comment>
<organism>
    <name type="scientific">Homo sapiens</name>
    <name type="common">Human</name>
    <dbReference type="NCBI Taxonomy" id="9606"/>
    <lineage>
        <taxon>Eukaryota</taxon>
        <taxon>Metazoa</taxon>
        <taxon>Chordata</taxon>
        <taxon>Craniata</taxon>
        <taxon>Vertebrata</taxon>
        <taxon>Euteleostomi</taxon>
        <taxon>Mammalia</taxon>
        <taxon>Eutheria</taxon>
        <taxon>Euarchontoglires</taxon>
        <taxon>Primates</taxon>
        <taxon>Haplorrhini</taxon>
        <taxon>Catarrhini</taxon>
        <taxon>Hominidae</taxon>
        <taxon>Homo</taxon>
    </lineage>
</organism>